<proteinExistence type="inferred from homology"/>
<organism>
    <name type="scientific">Rubrobacter xylanophilus (strain DSM 9941 / JCM 11954 / NBRC 16129 / PRD-1)</name>
    <dbReference type="NCBI Taxonomy" id="266117"/>
    <lineage>
        <taxon>Bacteria</taxon>
        <taxon>Bacillati</taxon>
        <taxon>Actinomycetota</taxon>
        <taxon>Rubrobacteria</taxon>
        <taxon>Rubrobacterales</taxon>
        <taxon>Rubrobacteraceae</taxon>
        <taxon>Rubrobacter</taxon>
    </lineage>
</organism>
<gene>
    <name evidence="1" type="primary">pyrG</name>
    <name type="ordered locus">Rxyl_1448</name>
</gene>
<name>PYRG_RUBXD</name>
<dbReference type="EC" id="6.3.4.2" evidence="1"/>
<dbReference type="EMBL" id="CP000386">
    <property type="protein sequence ID" value="ABG04410.1"/>
    <property type="molecule type" value="Genomic_DNA"/>
</dbReference>
<dbReference type="RefSeq" id="WP_011564427.1">
    <property type="nucleotide sequence ID" value="NC_008148.1"/>
</dbReference>
<dbReference type="SMR" id="Q1AW18"/>
<dbReference type="STRING" id="266117.Rxyl_1448"/>
<dbReference type="MEROPS" id="C26.964"/>
<dbReference type="KEGG" id="rxy:Rxyl_1448"/>
<dbReference type="eggNOG" id="COG0504">
    <property type="taxonomic scope" value="Bacteria"/>
</dbReference>
<dbReference type="HOGENOM" id="CLU_011675_5_0_11"/>
<dbReference type="OrthoDB" id="9801107at2"/>
<dbReference type="PhylomeDB" id="Q1AW18"/>
<dbReference type="UniPathway" id="UPA00159">
    <property type="reaction ID" value="UER00277"/>
</dbReference>
<dbReference type="Proteomes" id="UP000006637">
    <property type="component" value="Chromosome"/>
</dbReference>
<dbReference type="GO" id="GO:0005829">
    <property type="term" value="C:cytosol"/>
    <property type="evidence" value="ECO:0007669"/>
    <property type="project" value="TreeGrafter"/>
</dbReference>
<dbReference type="GO" id="GO:0005524">
    <property type="term" value="F:ATP binding"/>
    <property type="evidence" value="ECO:0007669"/>
    <property type="project" value="UniProtKB-KW"/>
</dbReference>
<dbReference type="GO" id="GO:0003883">
    <property type="term" value="F:CTP synthase activity"/>
    <property type="evidence" value="ECO:0007669"/>
    <property type="project" value="UniProtKB-UniRule"/>
</dbReference>
<dbReference type="GO" id="GO:0004359">
    <property type="term" value="F:glutaminase activity"/>
    <property type="evidence" value="ECO:0007669"/>
    <property type="project" value="RHEA"/>
</dbReference>
<dbReference type="GO" id="GO:0042802">
    <property type="term" value="F:identical protein binding"/>
    <property type="evidence" value="ECO:0007669"/>
    <property type="project" value="TreeGrafter"/>
</dbReference>
<dbReference type="GO" id="GO:0046872">
    <property type="term" value="F:metal ion binding"/>
    <property type="evidence" value="ECO:0007669"/>
    <property type="project" value="UniProtKB-KW"/>
</dbReference>
<dbReference type="GO" id="GO:0044210">
    <property type="term" value="P:'de novo' CTP biosynthetic process"/>
    <property type="evidence" value="ECO:0007669"/>
    <property type="project" value="UniProtKB-UniRule"/>
</dbReference>
<dbReference type="GO" id="GO:0019856">
    <property type="term" value="P:pyrimidine nucleobase biosynthetic process"/>
    <property type="evidence" value="ECO:0007669"/>
    <property type="project" value="TreeGrafter"/>
</dbReference>
<dbReference type="CDD" id="cd03113">
    <property type="entry name" value="CTPS_N"/>
    <property type="match status" value="1"/>
</dbReference>
<dbReference type="CDD" id="cd01746">
    <property type="entry name" value="GATase1_CTP_Synthase"/>
    <property type="match status" value="1"/>
</dbReference>
<dbReference type="FunFam" id="3.40.50.300:FF:000009">
    <property type="entry name" value="CTP synthase"/>
    <property type="match status" value="1"/>
</dbReference>
<dbReference type="FunFam" id="3.40.50.880:FF:000002">
    <property type="entry name" value="CTP synthase"/>
    <property type="match status" value="1"/>
</dbReference>
<dbReference type="Gene3D" id="3.40.50.880">
    <property type="match status" value="1"/>
</dbReference>
<dbReference type="Gene3D" id="3.40.50.300">
    <property type="entry name" value="P-loop containing nucleotide triphosphate hydrolases"/>
    <property type="match status" value="1"/>
</dbReference>
<dbReference type="HAMAP" id="MF_01227">
    <property type="entry name" value="PyrG"/>
    <property type="match status" value="1"/>
</dbReference>
<dbReference type="InterPro" id="IPR029062">
    <property type="entry name" value="Class_I_gatase-like"/>
</dbReference>
<dbReference type="InterPro" id="IPR004468">
    <property type="entry name" value="CTP_synthase"/>
</dbReference>
<dbReference type="InterPro" id="IPR017456">
    <property type="entry name" value="CTP_synthase_N"/>
</dbReference>
<dbReference type="InterPro" id="IPR017926">
    <property type="entry name" value="GATASE"/>
</dbReference>
<dbReference type="InterPro" id="IPR033828">
    <property type="entry name" value="GATase1_CTP_Synthase"/>
</dbReference>
<dbReference type="InterPro" id="IPR027417">
    <property type="entry name" value="P-loop_NTPase"/>
</dbReference>
<dbReference type="NCBIfam" id="NF003792">
    <property type="entry name" value="PRK05380.1"/>
    <property type="match status" value="1"/>
</dbReference>
<dbReference type="NCBIfam" id="TIGR00337">
    <property type="entry name" value="PyrG"/>
    <property type="match status" value="1"/>
</dbReference>
<dbReference type="PANTHER" id="PTHR11550">
    <property type="entry name" value="CTP SYNTHASE"/>
    <property type="match status" value="1"/>
</dbReference>
<dbReference type="PANTHER" id="PTHR11550:SF0">
    <property type="entry name" value="CTP SYNTHASE-RELATED"/>
    <property type="match status" value="1"/>
</dbReference>
<dbReference type="Pfam" id="PF06418">
    <property type="entry name" value="CTP_synth_N"/>
    <property type="match status" value="1"/>
</dbReference>
<dbReference type="Pfam" id="PF00117">
    <property type="entry name" value="GATase"/>
    <property type="match status" value="1"/>
</dbReference>
<dbReference type="SUPFAM" id="SSF52317">
    <property type="entry name" value="Class I glutamine amidotransferase-like"/>
    <property type="match status" value="1"/>
</dbReference>
<dbReference type="SUPFAM" id="SSF52540">
    <property type="entry name" value="P-loop containing nucleoside triphosphate hydrolases"/>
    <property type="match status" value="1"/>
</dbReference>
<dbReference type="PROSITE" id="PS51273">
    <property type="entry name" value="GATASE_TYPE_1"/>
    <property type="match status" value="1"/>
</dbReference>
<accession>Q1AW18</accession>
<keyword id="KW-0067">ATP-binding</keyword>
<keyword id="KW-0315">Glutamine amidotransferase</keyword>
<keyword id="KW-0436">Ligase</keyword>
<keyword id="KW-0460">Magnesium</keyword>
<keyword id="KW-0479">Metal-binding</keyword>
<keyword id="KW-0547">Nucleotide-binding</keyword>
<keyword id="KW-0665">Pyrimidine biosynthesis</keyword>
<keyword id="KW-1185">Reference proteome</keyword>
<evidence type="ECO:0000255" key="1">
    <source>
        <dbReference type="HAMAP-Rule" id="MF_01227"/>
    </source>
</evidence>
<sequence length="551" mass="60530">MSGTKYIFVTGGVVSSIGKGTSAAALGMLLKSRGYRVVLQKFDPYINVDPGTMNPYQHGEVFVTEDGAETDLDLGHYERFLDENLGRLSNVTTGSVYWEVISRERRGDYLGATVQVIPHITNEIKARIGRLGREKDVVITEIGGTVGDIESQPFLEAIRQFRNDVGRKNVLYVHVSYVPYIEAAGELKTKPTQHSTQRLREMGISPDILICRADRPIGEEIRRKIALFGDVEVDSVIPAQDAPTLYDIPLSLHGSGLDALVLEKLGLPAPPARLEEWRGLVRRLHGAEREVRVAVIGKYIRLQDAYLSVVEALRHAGGAHEVRVELDWVDSEQISDPEAARERLRGADGVLVLHGFGQRGIEGKIEAARYARESGTPYLGLCLGMQIAVIEFARNVAGLEMANSTEFDEETPHPVIDIMPDQVGVEMGGTMRLGSYPCRLRPGTLAARVYGAEVVHERHRHRYEVNNAYREVLEEAGMVFSGTSPDGRLVEIAELAGHPFFIGSQFHPEFKSRPLRPHPLFRGFVGACLGAAEEAGRVTAPAAGRKDGASG</sequence>
<reference key="1">
    <citation type="submission" date="2006-06" db="EMBL/GenBank/DDBJ databases">
        <title>Complete sequence of Rubrobacter xylanophilus DSM 9941.</title>
        <authorList>
            <consortium name="US DOE Joint Genome Institute"/>
            <person name="Copeland A."/>
            <person name="Lucas S."/>
            <person name="Lapidus A."/>
            <person name="Barry K."/>
            <person name="Detter J.C."/>
            <person name="Glavina del Rio T."/>
            <person name="Hammon N."/>
            <person name="Israni S."/>
            <person name="Dalin E."/>
            <person name="Tice H."/>
            <person name="Pitluck S."/>
            <person name="Munk A.C."/>
            <person name="Brettin T."/>
            <person name="Bruce D."/>
            <person name="Han C."/>
            <person name="Tapia R."/>
            <person name="Gilna P."/>
            <person name="Schmutz J."/>
            <person name="Larimer F."/>
            <person name="Land M."/>
            <person name="Hauser L."/>
            <person name="Kyrpides N."/>
            <person name="Lykidis A."/>
            <person name="da Costa M.S."/>
            <person name="Rainey F.A."/>
            <person name="Empadinhas N."/>
            <person name="Jolivet E."/>
            <person name="Battista J.R."/>
            <person name="Richardson P."/>
        </authorList>
    </citation>
    <scope>NUCLEOTIDE SEQUENCE [LARGE SCALE GENOMIC DNA]</scope>
    <source>
        <strain>DSM 9941 / JCM 11954 / NBRC 16129 / PRD-1</strain>
    </source>
</reference>
<feature type="chain" id="PRO_0000266207" description="CTP synthase">
    <location>
        <begin position="1"/>
        <end position="551"/>
    </location>
</feature>
<feature type="domain" description="Glutamine amidotransferase type-1" evidence="1">
    <location>
        <begin position="292"/>
        <end position="534"/>
    </location>
</feature>
<feature type="region of interest" description="Amidoligase domain" evidence="1">
    <location>
        <begin position="1"/>
        <end position="267"/>
    </location>
</feature>
<feature type="active site" description="Nucleophile; for glutamine hydrolysis" evidence="1">
    <location>
        <position position="382"/>
    </location>
</feature>
<feature type="active site" evidence="1">
    <location>
        <position position="507"/>
    </location>
</feature>
<feature type="active site" evidence="1">
    <location>
        <position position="509"/>
    </location>
</feature>
<feature type="binding site" evidence="1">
    <location>
        <position position="15"/>
    </location>
    <ligand>
        <name>CTP</name>
        <dbReference type="ChEBI" id="CHEBI:37563"/>
        <note>allosteric inhibitor</note>
    </ligand>
</feature>
<feature type="binding site" evidence="1">
    <location>
        <position position="15"/>
    </location>
    <ligand>
        <name>UTP</name>
        <dbReference type="ChEBI" id="CHEBI:46398"/>
    </ligand>
</feature>
<feature type="binding site" evidence="1">
    <location>
        <begin position="16"/>
        <end position="21"/>
    </location>
    <ligand>
        <name>ATP</name>
        <dbReference type="ChEBI" id="CHEBI:30616"/>
    </ligand>
</feature>
<feature type="binding site" evidence="1">
    <location>
        <position position="56"/>
    </location>
    <ligand>
        <name>L-glutamine</name>
        <dbReference type="ChEBI" id="CHEBI:58359"/>
    </ligand>
</feature>
<feature type="binding site" evidence="1">
    <location>
        <position position="73"/>
    </location>
    <ligand>
        <name>ATP</name>
        <dbReference type="ChEBI" id="CHEBI:30616"/>
    </ligand>
</feature>
<feature type="binding site" evidence="1">
    <location>
        <position position="73"/>
    </location>
    <ligand>
        <name>Mg(2+)</name>
        <dbReference type="ChEBI" id="CHEBI:18420"/>
    </ligand>
</feature>
<feature type="binding site" evidence="1">
    <location>
        <position position="141"/>
    </location>
    <ligand>
        <name>Mg(2+)</name>
        <dbReference type="ChEBI" id="CHEBI:18420"/>
    </ligand>
</feature>
<feature type="binding site" evidence="1">
    <location>
        <begin position="148"/>
        <end position="150"/>
    </location>
    <ligand>
        <name>CTP</name>
        <dbReference type="ChEBI" id="CHEBI:37563"/>
        <note>allosteric inhibitor</note>
    </ligand>
</feature>
<feature type="binding site" evidence="1">
    <location>
        <begin position="188"/>
        <end position="193"/>
    </location>
    <ligand>
        <name>CTP</name>
        <dbReference type="ChEBI" id="CHEBI:37563"/>
        <note>allosteric inhibitor</note>
    </ligand>
</feature>
<feature type="binding site" evidence="1">
    <location>
        <begin position="188"/>
        <end position="193"/>
    </location>
    <ligand>
        <name>UTP</name>
        <dbReference type="ChEBI" id="CHEBI:46398"/>
    </ligand>
</feature>
<feature type="binding site" evidence="1">
    <location>
        <position position="224"/>
    </location>
    <ligand>
        <name>CTP</name>
        <dbReference type="ChEBI" id="CHEBI:37563"/>
        <note>allosteric inhibitor</note>
    </ligand>
</feature>
<feature type="binding site" evidence="1">
    <location>
        <position position="224"/>
    </location>
    <ligand>
        <name>UTP</name>
        <dbReference type="ChEBI" id="CHEBI:46398"/>
    </ligand>
</feature>
<feature type="binding site" evidence="1">
    <location>
        <position position="355"/>
    </location>
    <ligand>
        <name>L-glutamine</name>
        <dbReference type="ChEBI" id="CHEBI:58359"/>
    </ligand>
</feature>
<feature type="binding site" evidence="1">
    <location>
        <begin position="383"/>
        <end position="386"/>
    </location>
    <ligand>
        <name>L-glutamine</name>
        <dbReference type="ChEBI" id="CHEBI:58359"/>
    </ligand>
</feature>
<feature type="binding site" evidence="1">
    <location>
        <position position="406"/>
    </location>
    <ligand>
        <name>L-glutamine</name>
        <dbReference type="ChEBI" id="CHEBI:58359"/>
    </ligand>
</feature>
<feature type="binding site" evidence="1">
    <location>
        <position position="462"/>
    </location>
    <ligand>
        <name>L-glutamine</name>
        <dbReference type="ChEBI" id="CHEBI:58359"/>
    </ligand>
</feature>
<comment type="function">
    <text evidence="1">Catalyzes the ATP-dependent amination of UTP to CTP with either L-glutamine or ammonia as the source of nitrogen. Regulates intracellular CTP levels through interactions with the four ribonucleotide triphosphates.</text>
</comment>
<comment type="catalytic activity">
    <reaction evidence="1">
        <text>UTP + L-glutamine + ATP + H2O = CTP + L-glutamate + ADP + phosphate + 2 H(+)</text>
        <dbReference type="Rhea" id="RHEA:26426"/>
        <dbReference type="ChEBI" id="CHEBI:15377"/>
        <dbReference type="ChEBI" id="CHEBI:15378"/>
        <dbReference type="ChEBI" id="CHEBI:29985"/>
        <dbReference type="ChEBI" id="CHEBI:30616"/>
        <dbReference type="ChEBI" id="CHEBI:37563"/>
        <dbReference type="ChEBI" id="CHEBI:43474"/>
        <dbReference type="ChEBI" id="CHEBI:46398"/>
        <dbReference type="ChEBI" id="CHEBI:58359"/>
        <dbReference type="ChEBI" id="CHEBI:456216"/>
        <dbReference type="EC" id="6.3.4.2"/>
    </reaction>
</comment>
<comment type="catalytic activity">
    <reaction evidence="1">
        <text>L-glutamine + H2O = L-glutamate + NH4(+)</text>
        <dbReference type="Rhea" id="RHEA:15889"/>
        <dbReference type="ChEBI" id="CHEBI:15377"/>
        <dbReference type="ChEBI" id="CHEBI:28938"/>
        <dbReference type="ChEBI" id="CHEBI:29985"/>
        <dbReference type="ChEBI" id="CHEBI:58359"/>
    </reaction>
</comment>
<comment type="catalytic activity">
    <reaction evidence="1">
        <text>UTP + NH4(+) + ATP = CTP + ADP + phosphate + 2 H(+)</text>
        <dbReference type="Rhea" id="RHEA:16597"/>
        <dbReference type="ChEBI" id="CHEBI:15378"/>
        <dbReference type="ChEBI" id="CHEBI:28938"/>
        <dbReference type="ChEBI" id="CHEBI:30616"/>
        <dbReference type="ChEBI" id="CHEBI:37563"/>
        <dbReference type="ChEBI" id="CHEBI:43474"/>
        <dbReference type="ChEBI" id="CHEBI:46398"/>
        <dbReference type="ChEBI" id="CHEBI:456216"/>
    </reaction>
</comment>
<comment type="activity regulation">
    <text evidence="1">Allosterically activated by GTP, when glutamine is the substrate; GTP has no effect on the reaction when ammonia is the substrate. The allosteric effector GTP functions by stabilizing the protein conformation that binds the tetrahedral intermediate(s) formed during glutamine hydrolysis. Inhibited by the product CTP, via allosteric rather than competitive inhibition.</text>
</comment>
<comment type="pathway">
    <text evidence="1">Pyrimidine metabolism; CTP biosynthesis via de novo pathway; CTP from UDP: step 2/2.</text>
</comment>
<comment type="subunit">
    <text evidence="1">Homotetramer.</text>
</comment>
<comment type="miscellaneous">
    <text evidence="1">CTPSs have evolved a hybrid strategy for distinguishing between UTP and CTP. The overlapping regions of the product feedback inhibitory and substrate sites recognize a common feature in both compounds, the triphosphate moiety. To differentiate isosteric substrate and product pyrimidine rings, an additional pocket far from the expected kinase/ligase catalytic site, specifically recognizes the cytosine and ribose portions of the product inhibitor.</text>
</comment>
<comment type="similarity">
    <text evidence="1">Belongs to the CTP synthase family.</text>
</comment>
<protein>
    <recommendedName>
        <fullName evidence="1">CTP synthase</fullName>
        <ecNumber evidence="1">6.3.4.2</ecNumber>
    </recommendedName>
    <alternativeName>
        <fullName evidence="1">Cytidine 5'-triphosphate synthase</fullName>
    </alternativeName>
    <alternativeName>
        <fullName evidence="1">Cytidine triphosphate synthetase</fullName>
        <shortName evidence="1">CTP synthetase</shortName>
        <shortName evidence="1">CTPS</shortName>
    </alternativeName>
    <alternativeName>
        <fullName evidence="1">UTP--ammonia ligase</fullName>
    </alternativeName>
</protein>